<protein>
    <recommendedName>
        <fullName evidence="1">Anthranilate phosphoribosyltransferase</fullName>
        <ecNumber evidence="1">2.4.2.18</ecNumber>
    </recommendedName>
</protein>
<gene>
    <name evidence="1" type="primary">trpD</name>
    <name type="ordered locus">ABSDF1163</name>
</gene>
<keyword id="KW-0028">Amino-acid biosynthesis</keyword>
<keyword id="KW-0057">Aromatic amino acid biosynthesis</keyword>
<keyword id="KW-0328">Glycosyltransferase</keyword>
<keyword id="KW-0460">Magnesium</keyword>
<keyword id="KW-0479">Metal-binding</keyword>
<keyword id="KW-0808">Transferase</keyword>
<keyword id="KW-0822">Tryptophan biosynthesis</keyword>
<comment type="function">
    <text evidence="1">Catalyzes the transfer of the phosphoribosyl group of 5-phosphorylribose-1-pyrophosphate (PRPP) to anthranilate to yield N-(5'-phosphoribosyl)-anthranilate (PRA).</text>
</comment>
<comment type="catalytic activity">
    <reaction evidence="1">
        <text>N-(5-phospho-beta-D-ribosyl)anthranilate + diphosphate = 5-phospho-alpha-D-ribose 1-diphosphate + anthranilate</text>
        <dbReference type="Rhea" id="RHEA:11768"/>
        <dbReference type="ChEBI" id="CHEBI:16567"/>
        <dbReference type="ChEBI" id="CHEBI:18277"/>
        <dbReference type="ChEBI" id="CHEBI:33019"/>
        <dbReference type="ChEBI" id="CHEBI:58017"/>
        <dbReference type="EC" id="2.4.2.18"/>
    </reaction>
</comment>
<comment type="cofactor">
    <cofactor evidence="1">
        <name>Mg(2+)</name>
        <dbReference type="ChEBI" id="CHEBI:18420"/>
    </cofactor>
    <text evidence="1">Binds 2 magnesium ions per monomer.</text>
</comment>
<comment type="pathway">
    <text evidence="1">Amino-acid biosynthesis; L-tryptophan biosynthesis; L-tryptophan from chorismate: step 2/5.</text>
</comment>
<comment type="subunit">
    <text evidence="1">Homodimer.</text>
</comment>
<comment type="similarity">
    <text evidence="1">Belongs to the anthranilate phosphoribosyltransferase family.</text>
</comment>
<name>TRPD_ACIBS</name>
<feature type="chain" id="PRO_1000099771" description="Anthranilate phosphoribosyltransferase">
    <location>
        <begin position="1"/>
        <end position="349"/>
    </location>
</feature>
<feature type="binding site" evidence="1">
    <location>
        <position position="82"/>
    </location>
    <ligand>
        <name>5-phospho-alpha-D-ribose 1-diphosphate</name>
        <dbReference type="ChEBI" id="CHEBI:58017"/>
    </ligand>
</feature>
<feature type="binding site" evidence="1">
    <location>
        <position position="82"/>
    </location>
    <ligand>
        <name>anthranilate</name>
        <dbReference type="ChEBI" id="CHEBI:16567"/>
        <label>1</label>
    </ligand>
</feature>
<feature type="binding site" evidence="1">
    <location>
        <begin position="85"/>
        <end position="86"/>
    </location>
    <ligand>
        <name>5-phospho-alpha-D-ribose 1-diphosphate</name>
        <dbReference type="ChEBI" id="CHEBI:58017"/>
    </ligand>
</feature>
<feature type="binding site" evidence="1">
    <location>
        <begin position="92"/>
        <end position="95"/>
    </location>
    <ligand>
        <name>5-phospho-alpha-D-ribose 1-diphosphate</name>
        <dbReference type="ChEBI" id="CHEBI:58017"/>
    </ligand>
</feature>
<feature type="binding site" evidence="1">
    <location>
        <position position="94"/>
    </location>
    <ligand>
        <name>Mg(2+)</name>
        <dbReference type="ChEBI" id="CHEBI:18420"/>
        <label>1</label>
    </ligand>
</feature>
<feature type="binding site" evidence="1">
    <location>
        <begin position="110"/>
        <end position="118"/>
    </location>
    <ligand>
        <name>5-phospho-alpha-D-ribose 1-diphosphate</name>
        <dbReference type="ChEBI" id="CHEBI:58017"/>
    </ligand>
</feature>
<feature type="binding site" evidence="1">
    <location>
        <position position="113"/>
    </location>
    <ligand>
        <name>anthranilate</name>
        <dbReference type="ChEBI" id="CHEBI:16567"/>
        <label>1</label>
    </ligand>
</feature>
<feature type="binding site" evidence="1">
    <location>
        <position position="122"/>
    </location>
    <ligand>
        <name>5-phospho-alpha-D-ribose 1-diphosphate</name>
        <dbReference type="ChEBI" id="CHEBI:58017"/>
    </ligand>
</feature>
<feature type="binding site" evidence="1">
    <location>
        <position position="168"/>
    </location>
    <ligand>
        <name>anthranilate</name>
        <dbReference type="ChEBI" id="CHEBI:16567"/>
        <label>2</label>
    </ligand>
</feature>
<feature type="binding site" evidence="1">
    <location>
        <position position="227"/>
    </location>
    <ligand>
        <name>Mg(2+)</name>
        <dbReference type="ChEBI" id="CHEBI:18420"/>
        <label>2</label>
    </ligand>
</feature>
<feature type="binding site" evidence="1">
    <location>
        <position position="228"/>
    </location>
    <ligand>
        <name>Mg(2+)</name>
        <dbReference type="ChEBI" id="CHEBI:18420"/>
        <label>1</label>
    </ligand>
</feature>
<feature type="binding site" evidence="1">
    <location>
        <position position="228"/>
    </location>
    <ligand>
        <name>Mg(2+)</name>
        <dbReference type="ChEBI" id="CHEBI:18420"/>
        <label>2</label>
    </ligand>
</feature>
<evidence type="ECO:0000255" key="1">
    <source>
        <dbReference type="HAMAP-Rule" id="MF_00211"/>
    </source>
</evidence>
<dbReference type="EC" id="2.4.2.18" evidence="1"/>
<dbReference type="EMBL" id="CU468230">
    <property type="protein sequence ID" value="CAP00513.1"/>
    <property type="molecule type" value="Genomic_DNA"/>
</dbReference>
<dbReference type="SMR" id="B0VUS1"/>
<dbReference type="KEGG" id="abm:ABSDF1163"/>
<dbReference type="HOGENOM" id="CLU_034315_2_1_6"/>
<dbReference type="UniPathway" id="UPA00035">
    <property type="reaction ID" value="UER00041"/>
</dbReference>
<dbReference type="Proteomes" id="UP000001741">
    <property type="component" value="Chromosome"/>
</dbReference>
<dbReference type="GO" id="GO:0005829">
    <property type="term" value="C:cytosol"/>
    <property type="evidence" value="ECO:0007669"/>
    <property type="project" value="TreeGrafter"/>
</dbReference>
<dbReference type="GO" id="GO:0004048">
    <property type="term" value="F:anthranilate phosphoribosyltransferase activity"/>
    <property type="evidence" value="ECO:0007669"/>
    <property type="project" value="UniProtKB-UniRule"/>
</dbReference>
<dbReference type="GO" id="GO:0000287">
    <property type="term" value="F:magnesium ion binding"/>
    <property type="evidence" value="ECO:0007669"/>
    <property type="project" value="UniProtKB-UniRule"/>
</dbReference>
<dbReference type="GO" id="GO:0000162">
    <property type="term" value="P:L-tryptophan biosynthetic process"/>
    <property type="evidence" value="ECO:0007669"/>
    <property type="project" value="UniProtKB-UniRule"/>
</dbReference>
<dbReference type="FunFam" id="1.20.970.10:FF:000006">
    <property type="entry name" value="Anthranilate phosphoribosyltransferase"/>
    <property type="match status" value="1"/>
</dbReference>
<dbReference type="FunFam" id="3.40.1030.10:FF:000002">
    <property type="entry name" value="Anthranilate phosphoribosyltransferase"/>
    <property type="match status" value="1"/>
</dbReference>
<dbReference type="Gene3D" id="3.40.1030.10">
    <property type="entry name" value="Nucleoside phosphorylase/phosphoribosyltransferase catalytic domain"/>
    <property type="match status" value="1"/>
</dbReference>
<dbReference type="Gene3D" id="1.20.970.10">
    <property type="entry name" value="Transferase, Pyrimidine Nucleoside Phosphorylase, Chain C"/>
    <property type="match status" value="1"/>
</dbReference>
<dbReference type="HAMAP" id="MF_00211">
    <property type="entry name" value="TrpD"/>
    <property type="match status" value="1"/>
</dbReference>
<dbReference type="InterPro" id="IPR005940">
    <property type="entry name" value="Anthranilate_Pribosyl_Tfrase"/>
</dbReference>
<dbReference type="InterPro" id="IPR000312">
    <property type="entry name" value="Glycosyl_Trfase_fam3"/>
</dbReference>
<dbReference type="InterPro" id="IPR017459">
    <property type="entry name" value="Glycosyl_Trfase_fam3_N_dom"/>
</dbReference>
<dbReference type="InterPro" id="IPR036320">
    <property type="entry name" value="Glycosyl_Trfase_fam3_N_dom_sf"/>
</dbReference>
<dbReference type="InterPro" id="IPR035902">
    <property type="entry name" value="Nuc_phospho_transferase"/>
</dbReference>
<dbReference type="NCBIfam" id="TIGR01245">
    <property type="entry name" value="trpD"/>
    <property type="match status" value="1"/>
</dbReference>
<dbReference type="PANTHER" id="PTHR43285">
    <property type="entry name" value="ANTHRANILATE PHOSPHORIBOSYLTRANSFERASE"/>
    <property type="match status" value="1"/>
</dbReference>
<dbReference type="PANTHER" id="PTHR43285:SF2">
    <property type="entry name" value="ANTHRANILATE PHOSPHORIBOSYLTRANSFERASE"/>
    <property type="match status" value="1"/>
</dbReference>
<dbReference type="Pfam" id="PF02885">
    <property type="entry name" value="Glycos_trans_3N"/>
    <property type="match status" value="1"/>
</dbReference>
<dbReference type="Pfam" id="PF00591">
    <property type="entry name" value="Glycos_transf_3"/>
    <property type="match status" value="1"/>
</dbReference>
<dbReference type="SUPFAM" id="SSF52418">
    <property type="entry name" value="Nucleoside phosphorylase/phosphoribosyltransferase catalytic domain"/>
    <property type="match status" value="1"/>
</dbReference>
<dbReference type="SUPFAM" id="SSF47648">
    <property type="entry name" value="Nucleoside phosphorylase/phosphoribosyltransferase N-terminal domain"/>
    <property type="match status" value="1"/>
</dbReference>
<organism>
    <name type="scientific">Acinetobacter baumannii (strain SDF)</name>
    <dbReference type="NCBI Taxonomy" id="509170"/>
    <lineage>
        <taxon>Bacteria</taxon>
        <taxon>Pseudomonadati</taxon>
        <taxon>Pseudomonadota</taxon>
        <taxon>Gammaproteobacteria</taxon>
        <taxon>Moraxellales</taxon>
        <taxon>Moraxellaceae</taxon>
        <taxon>Acinetobacter</taxon>
        <taxon>Acinetobacter calcoaceticus/baumannii complex</taxon>
    </lineage>
</organism>
<reference key="1">
    <citation type="journal article" date="2008" name="PLoS ONE">
        <title>Comparative analysis of Acinetobacters: three genomes for three lifestyles.</title>
        <authorList>
            <person name="Vallenet D."/>
            <person name="Nordmann P."/>
            <person name="Barbe V."/>
            <person name="Poirel L."/>
            <person name="Mangenot S."/>
            <person name="Bataille E."/>
            <person name="Dossat C."/>
            <person name="Gas S."/>
            <person name="Kreimeyer A."/>
            <person name="Lenoble P."/>
            <person name="Oztas S."/>
            <person name="Poulain J."/>
            <person name="Segurens B."/>
            <person name="Robert C."/>
            <person name="Abergel C."/>
            <person name="Claverie J.-M."/>
            <person name="Raoult D."/>
            <person name="Medigue C."/>
            <person name="Weissenbach J."/>
            <person name="Cruveiller S."/>
        </authorList>
    </citation>
    <scope>NUCLEOTIDE SEQUENCE [LARGE SCALE GENOMIC DNA]</scope>
    <source>
        <strain>SDF</strain>
    </source>
</reference>
<sequence length="349" mass="37461">MNIQQALNHITKNIHLTQPQMEEIMRSIMQGEATEAQIGALMMGLRMKGESIDEMTAAARVMREFAIKIDVSDIKHLVDIVGTGGDGQNLFNVSTASSFVIAAAGATIAKHGNRGVSSKSGSSDLLEQAGIHLDLDMQQTERCIREMGVGFLFAPNHHKAMKYAAGPRRELGIRSIFNLLGPLTNPAGVKRFVIGVFSDELCRPIAEVMKQLGAEHVMVVHSKDGLDEISLAAPTTIAELKDGEITEWTLNPEDVGIESQTLNGLVVADATASLKLIKDALSKNKSDIGEKAANMIALNAGAGIYVAGITKTYAQAVVFAQDIIYGGQTLEKMSVLAEFTKTLKQSQAD</sequence>
<accession>B0VUS1</accession>
<proteinExistence type="inferred from homology"/>